<protein>
    <recommendedName>
        <fullName evidence="1">Small ribosomal subunit protein bS18</fullName>
    </recommendedName>
    <alternativeName>
        <fullName evidence="2">30S ribosomal protein S18</fullName>
    </alternativeName>
</protein>
<organism>
    <name type="scientific">Shewanella piezotolerans (strain WP3 / JCM 13877)</name>
    <dbReference type="NCBI Taxonomy" id="225849"/>
    <lineage>
        <taxon>Bacteria</taxon>
        <taxon>Pseudomonadati</taxon>
        <taxon>Pseudomonadota</taxon>
        <taxon>Gammaproteobacteria</taxon>
        <taxon>Alteromonadales</taxon>
        <taxon>Shewanellaceae</taxon>
        <taxon>Shewanella</taxon>
    </lineage>
</organism>
<name>RS18_SHEPW</name>
<dbReference type="EMBL" id="CP000472">
    <property type="protein sequence ID" value="ACJ27529.1"/>
    <property type="molecule type" value="Genomic_DNA"/>
</dbReference>
<dbReference type="RefSeq" id="WP_005497284.1">
    <property type="nucleotide sequence ID" value="NC_011566.1"/>
</dbReference>
<dbReference type="SMR" id="B8CIQ3"/>
<dbReference type="STRING" id="225849.swp_0713"/>
<dbReference type="KEGG" id="swp:swp_0713"/>
<dbReference type="eggNOG" id="COG0238">
    <property type="taxonomic scope" value="Bacteria"/>
</dbReference>
<dbReference type="HOGENOM" id="CLU_148710_2_3_6"/>
<dbReference type="OrthoDB" id="9812008at2"/>
<dbReference type="Proteomes" id="UP000000753">
    <property type="component" value="Chromosome"/>
</dbReference>
<dbReference type="GO" id="GO:0022627">
    <property type="term" value="C:cytosolic small ribosomal subunit"/>
    <property type="evidence" value="ECO:0007669"/>
    <property type="project" value="TreeGrafter"/>
</dbReference>
<dbReference type="GO" id="GO:0070181">
    <property type="term" value="F:small ribosomal subunit rRNA binding"/>
    <property type="evidence" value="ECO:0007669"/>
    <property type="project" value="TreeGrafter"/>
</dbReference>
<dbReference type="GO" id="GO:0003735">
    <property type="term" value="F:structural constituent of ribosome"/>
    <property type="evidence" value="ECO:0007669"/>
    <property type="project" value="InterPro"/>
</dbReference>
<dbReference type="GO" id="GO:0006412">
    <property type="term" value="P:translation"/>
    <property type="evidence" value="ECO:0007669"/>
    <property type="project" value="UniProtKB-UniRule"/>
</dbReference>
<dbReference type="FunFam" id="4.10.640.10:FF:000001">
    <property type="entry name" value="30S ribosomal protein S18"/>
    <property type="match status" value="1"/>
</dbReference>
<dbReference type="Gene3D" id="4.10.640.10">
    <property type="entry name" value="Ribosomal protein S18"/>
    <property type="match status" value="1"/>
</dbReference>
<dbReference type="HAMAP" id="MF_00270">
    <property type="entry name" value="Ribosomal_bS18"/>
    <property type="match status" value="1"/>
</dbReference>
<dbReference type="InterPro" id="IPR001648">
    <property type="entry name" value="Ribosomal_bS18"/>
</dbReference>
<dbReference type="InterPro" id="IPR018275">
    <property type="entry name" value="Ribosomal_bS18_CS"/>
</dbReference>
<dbReference type="InterPro" id="IPR036870">
    <property type="entry name" value="Ribosomal_bS18_sf"/>
</dbReference>
<dbReference type="NCBIfam" id="TIGR00165">
    <property type="entry name" value="S18"/>
    <property type="match status" value="1"/>
</dbReference>
<dbReference type="PANTHER" id="PTHR13479">
    <property type="entry name" value="30S RIBOSOMAL PROTEIN S18"/>
    <property type="match status" value="1"/>
</dbReference>
<dbReference type="PANTHER" id="PTHR13479:SF40">
    <property type="entry name" value="SMALL RIBOSOMAL SUBUNIT PROTEIN BS18M"/>
    <property type="match status" value="1"/>
</dbReference>
<dbReference type="Pfam" id="PF01084">
    <property type="entry name" value="Ribosomal_S18"/>
    <property type="match status" value="1"/>
</dbReference>
<dbReference type="PRINTS" id="PR00974">
    <property type="entry name" value="RIBOSOMALS18"/>
</dbReference>
<dbReference type="SUPFAM" id="SSF46911">
    <property type="entry name" value="Ribosomal protein S18"/>
    <property type="match status" value="1"/>
</dbReference>
<dbReference type="PROSITE" id="PS00057">
    <property type="entry name" value="RIBOSOMAL_S18"/>
    <property type="match status" value="1"/>
</dbReference>
<evidence type="ECO:0000255" key="1">
    <source>
        <dbReference type="HAMAP-Rule" id="MF_00270"/>
    </source>
</evidence>
<evidence type="ECO:0000305" key="2"/>
<feature type="chain" id="PRO_1000119287" description="Small ribosomal subunit protein bS18">
    <location>
        <begin position="1"/>
        <end position="75"/>
    </location>
</feature>
<gene>
    <name evidence="1" type="primary">rpsR</name>
    <name type="ordered locus">swp_0713</name>
</gene>
<reference key="1">
    <citation type="journal article" date="2008" name="PLoS ONE">
        <title>Environmental adaptation: genomic analysis of the piezotolerant and psychrotolerant deep-sea iron reducing bacterium Shewanella piezotolerans WP3.</title>
        <authorList>
            <person name="Wang F."/>
            <person name="Wang J."/>
            <person name="Jian H."/>
            <person name="Zhang B."/>
            <person name="Li S."/>
            <person name="Wang F."/>
            <person name="Zeng X."/>
            <person name="Gao L."/>
            <person name="Bartlett D.H."/>
            <person name="Yu J."/>
            <person name="Hu S."/>
            <person name="Xiao X."/>
        </authorList>
    </citation>
    <scope>NUCLEOTIDE SEQUENCE [LARGE SCALE GENOMIC DNA]</scope>
    <source>
        <strain>WP3 / JCM 13877</strain>
    </source>
</reference>
<sequence>MARYFRRRKFCRFTAEGVTEIDYKDIVTLKNYITESGKIVPSRITGTNAKYQRQLARAIKRARYLSLLPYTDLHQ</sequence>
<keyword id="KW-0687">Ribonucleoprotein</keyword>
<keyword id="KW-0689">Ribosomal protein</keyword>
<keyword id="KW-0694">RNA-binding</keyword>
<keyword id="KW-0699">rRNA-binding</keyword>
<proteinExistence type="inferred from homology"/>
<comment type="function">
    <text evidence="1">Binds as a heterodimer with protein bS6 to the central domain of the 16S rRNA, where it helps stabilize the platform of the 30S subunit.</text>
</comment>
<comment type="subunit">
    <text evidence="1">Part of the 30S ribosomal subunit. Forms a tight heterodimer with protein bS6.</text>
</comment>
<comment type="similarity">
    <text evidence="1">Belongs to the bacterial ribosomal protein bS18 family.</text>
</comment>
<accession>B8CIQ3</accession>